<protein>
    <recommendedName>
        <fullName>Protein HIR1</fullName>
    </recommendedName>
</protein>
<keyword id="KW-0156">Chromatin regulator</keyword>
<keyword id="KW-0539">Nucleus</keyword>
<keyword id="KW-1185">Reference proteome</keyword>
<keyword id="KW-0677">Repeat</keyword>
<keyword id="KW-0678">Repressor</keyword>
<keyword id="KW-0804">Transcription</keyword>
<keyword id="KW-0805">Transcription regulation</keyword>
<keyword id="KW-0853">WD repeat</keyword>
<organism>
    <name type="scientific">Kluyveromyces lactis (strain ATCC 8585 / CBS 2359 / DSM 70799 / NBRC 1267 / NRRL Y-1140 / WM37)</name>
    <name type="common">Yeast</name>
    <name type="synonym">Candida sphaerica</name>
    <dbReference type="NCBI Taxonomy" id="284590"/>
    <lineage>
        <taxon>Eukaryota</taxon>
        <taxon>Fungi</taxon>
        <taxon>Dikarya</taxon>
        <taxon>Ascomycota</taxon>
        <taxon>Saccharomycotina</taxon>
        <taxon>Saccharomycetes</taxon>
        <taxon>Saccharomycetales</taxon>
        <taxon>Saccharomycetaceae</taxon>
        <taxon>Kluyveromyces</taxon>
    </lineage>
</organism>
<proteinExistence type="inferred from homology"/>
<evidence type="ECO:0000250" key="1"/>
<evidence type="ECO:0000256" key="2">
    <source>
        <dbReference type="SAM" id="MobiDB-lite"/>
    </source>
</evidence>
<evidence type="ECO:0000305" key="3"/>
<accession>Q6CXX3</accession>
<reference key="1">
    <citation type="journal article" date="2004" name="Nature">
        <title>Genome evolution in yeasts.</title>
        <authorList>
            <person name="Dujon B."/>
            <person name="Sherman D."/>
            <person name="Fischer G."/>
            <person name="Durrens P."/>
            <person name="Casaregola S."/>
            <person name="Lafontaine I."/>
            <person name="de Montigny J."/>
            <person name="Marck C."/>
            <person name="Neuveglise C."/>
            <person name="Talla E."/>
            <person name="Goffard N."/>
            <person name="Frangeul L."/>
            <person name="Aigle M."/>
            <person name="Anthouard V."/>
            <person name="Babour A."/>
            <person name="Barbe V."/>
            <person name="Barnay S."/>
            <person name="Blanchin S."/>
            <person name="Beckerich J.-M."/>
            <person name="Beyne E."/>
            <person name="Bleykasten C."/>
            <person name="Boisrame A."/>
            <person name="Boyer J."/>
            <person name="Cattolico L."/>
            <person name="Confanioleri F."/>
            <person name="de Daruvar A."/>
            <person name="Despons L."/>
            <person name="Fabre E."/>
            <person name="Fairhead C."/>
            <person name="Ferry-Dumazet H."/>
            <person name="Groppi A."/>
            <person name="Hantraye F."/>
            <person name="Hennequin C."/>
            <person name="Jauniaux N."/>
            <person name="Joyet P."/>
            <person name="Kachouri R."/>
            <person name="Kerrest A."/>
            <person name="Koszul R."/>
            <person name="Lemaire M."/>
            <person name="Lesur I."/>
            <person name="Ma L."/>
            <person name="Muller H."/>
            <person name="Nicaud J.-M."/>
            <person name="Nikolski M."/>
            <person name="Oztas S."/>
            <person name="Ozier-Kalogeropoulos O."/>
            <person name="Pellenz S."/>
            <person name="Potier S."/>
            <person name="Richard G.-F."/>
            <person name="Straub M.-L."/>
            <person name="Suleau A."/>
            <person name="Swennen D."/>
            <person name="Tekaia F."/>
            <person name="Wesolowski-Louvel M."/>
            <person name="Westhof E."/>
            <person name="Wirth B."/>
            <person name="Zeniou-Meyer M."/>
            <person name="Zivanovic Y."/>
            <person name="Bolotin-Fukuhara M."/>
            <person name="Thierry A."/>
            <person name="Bouchier C."/>
            <person name="Caudron B."/>
            <person name="Scarpelli C."/>
            <person name="Gaillardin C."/>
            <person name="Weissenbach J."/>
            <person name="Wincker P."/>
            <person name="Souciet J.-L."/>
        </authorList>
    </citation>
    <scope>NUCLEOTIDE SEQUENCE [LARGE SCALE GENOMIC DNA]</scope>
    <source>
        <strain>ATCC 8585 / CBS 2359 / DSM 70799 / NBRC 1267 / NRRL Y-1140 / WM37</strain>
    </source>
</reference>
<comment type="function">
    <text evidence="1">Required for replication-independent chromatin assembly and for the periodic repression of histone gene transcription during the cell cycle.</text>
</comment>
<comment type="subcellular location">
    <subcellularLocation>
        <location evidence="1">Nucleus</location>
    </subcellularLocation>
</comment>
<comment type="similarity">
    <text evidence="3">Belongs to the WD repeat HIR1 family.</text>
</comment>
<gene>
    <name type="primary">HIR1</name>
    <name type="ordered locus">KLLA0A04928g</name>
</gene>
<feature type="chain" id="PRO_0000286413" description="Protein HIR1">
    <location>
        <begin position="1"/>
        <end position="861"/>
    </location>
</feature>
<feature type="repeat" description="WD 1">
    <location>
        <begin position="14"/>
        <end position="54"/>
    </location>
</feature>
<feature type="repeat" description="WD 2">
    <location>
        <begin position="74"/>
        <end position="113"/>
    </location>
</feature>
<feature type="repeat" description="WD 3">
    <location>
        <begin position="132"/>
        <end position="171"/>
    </location>
</feature>
<feature type="repeat" description="WD 4">
    <location>
        <begin position="174"/>
        <end position="213"/>
    </location>
</feature>
<feature type="repeat" description="WD 5">
    <location>
        <begin position="227"/>
        <end position="270"/>
    </location>
</feature>
<feature type="repeat" description="WD 6">
    <location>
        <begin position="295"/>
        <end position="337"/>
    </location>
</feature>
<feature type="repeat" description="WD 7">
    <location>
        <begin position="341"/>
        <end position="382"/>
    </location>
</feature>
<feature type="region of interest" description="Disordered" evidence="2">
    <location>
        <begin position="450"/>
        <end position="471"/>
    </location>
</feature>
<feature type="compositionally biased region" description="Low complexity" evidence="2">
    <location>
        <begin position="455"/>
        <end position="466"/>
    </location>
</feature>
<sequence length="861" mass="96002">MKLLKLPWLQHREEHKSYEVYTCDVSPDSQRLATGGLDGKIRIWSIPDILKFASNPNASTDKDILMKPLSTMSRHAGSVTTVKFSPDGKYLASGSDDRILLIWELEGGTTQPMFGAESTDIEHWNVRRRLVAHDNDIQDICWAPDSSIMVSVGLDRAIIIWNGSTFEKVKRFDVHQSHVKGVVFDPANKYFATASDDRTIKMFRYHKTGETSFSVEHVITEPFKGSPLTTYFRRLSWSPDGQHIAAPNAMNGPVSTVAIIERGTWESPVSLVGHDQPTEVASFNPRIFKRQKDDSTTDTIDGKKTGISDEVDCIVASSGQDKTLAVWSTSKARPLIVAQDICGKSITDMSWTPDGKILFITSLDSSIVVLTFEDNEFGEAIPLEQNIEYLHRYGVDKDSLVFPETVEQLILEDQAKNLKKSNVDMNLLENRLGKPGTIAEPNILQVRSKKRAQLTGTGNHTDNNTTSKAEPPHVNILQVKRKNKVTGVTEVLHDTVVKNGKKRVAPTLITMGHSPDKSRKRVILSTAQSLNNTVQPTTKPAPEEKSTLAKLQSTKLSKPSFSIPRLGIHTLIMGFKERTRENFINQGSTDSTVDESNVNIDEGPQQLEQNSAEEHLLTLNSKTTLEKIWRDEPNTRYLEFNSILPDADAVLREMGTIDDLYVLEVRNGVERSIQFDTEALYDNSTRVLGYHAGQRSFELFFPDVVLTCVGCMETKTWILATTTGQLFFIDTLGQARCPRISIGHKIIKLCTSQSHVIAITETALIYVWDLVSMSLTLKNIPLLPLLARDPITGNRARFTSKIKSAKMTENKDLQLVMTDIAPDSDSNPSTLHFLYSSSLSCWCSPKEALLVDASVEQVITS</sequence>
<dbReference type="EMBL" id="CR382121">
    <property type="protein sequence ID" value="CAH02804.1"/>
    <property type="molecule type" value="Genomic_DNA"/>
</dbReference>
<dbReference type="RefSeq" id="XP_451216.1">
    <property type="nucleotide sequence ID" value="XM_451216.1"/>
</dbReference>
<dbReference type="SMR" id="Q6CXX3"/>
<dbReference type="FunCoup" id="Q6CXX3">
    <property type="interactions" value="216"/>
</dbReference>
<dbReference type="STRING" id="284590.Q6CXX3"/>
<dbReference type="PaxDb" id="284590-Q6CXX3"/>
<dbReference type="KEGG" id="kla:KLLA0_A04928g"/>
<dbReference type="eggNOG" id="KOG0973">
    <property type="taxonomic scope" value="Eukaryota"/>
</dbReference>
<dbReference type="HOGENOM" id="CLU_004372_3_0_1"/>
<dbReference type="InParanoid" id="Q6CXX3"/>
<dbReference type="OMA" id="KRFDVHQ"/>
<dbReference type="Proteomes" id="UP000000598">
    <property type="component" value="Chromosome A"/>
</dbReference>
<dbReference type="GO" id="GO:0000785">
    <property type="term" value="C:chromatin"/>
    <property type="evidence" value="ECO:0007669"/>
    <property type="project" value="TreeGrafter"/>
</dbReference>
<dbReference type="GO" id="GO:0000417">
    <property type="term" value="C:HIR complex"/>
    <property type="evidence" value="ECO:0007669"/>
    <property type="project" value="TreeGrafter"/>
</dbReference>
<dbReference type="GO" id="GO:0005634">
    <property type="term" value="C:nucleus"/>
    <property type="evidence" value="ECO:0007669"/>
    <property type="project" value="UniProtKB-SubCell"/>
</dbReference>
<dbReference type="GO" id="GO:0031491">
    <property type="term" value="F:nucleosome binding"/>
    <property type="evidence" value="ECO:0007669"/>
    <property type="project" value="TreeGrafter"/>
</dbReference>
<dbReference type="GO" id="GO:0006338">
    <property type="term" value="P:chromatin remodeling"/>
    <property type="evidence" value="ECO:0007669"/>
    <property type="project" value="InterPro"/>
</dbReference>
<dbReference type="GO" id="GO:0006351">
    <property type="term" value="P:DNA-templated transcription"/>
    <property type="evidence" value="ECO:0007669"/>
    <property type="project" value="InterPro"/>
</dbReference>
<dbReference type="GO" id="GO:0006355">
    <property type="term" value="P:regulation of DNA-templated transcription"/>
    <property type="evidence" value="ECO:0007669"/>
    <property type="project" value="InterPro"/>
</dbReference>
<dbReference type="CDD" id="cd00200">
    <property type="entry name" value="WD40"/>
    <property type="match status" value="1"/>
</dbReference>
<dbReference type="FunFam" id="2.130.10.10:FF:000290">
    <property type="entry name" value="Protein HIR"/>
    <property type="match status" value="1"/>
</dbReference>
<dbReference type="FunFam" id="2.130.10.10:FF:001073">
    <property type="entry name" value="Protein HIR"/>
    <property type="match status" value="1"/>
</dbReference>
<dbReference type="Gene3D" id="2.130.10.10">
    <property type="entry name" value="YVTN repeat-like/Quinoprotein amine dehydrogenase"/>
    <property type="match status" value="2"/>
</dbReference>
<dbReference type="InterPro" id="IPR055410">
    <property type="entry name" value="CAF1B_HIR1_beta-prop"/>
</dbReference>
<dbReference type="InterPro" id="IPR031120">
    <property type="entry name" value="HIR1-like"/>
</dbReference>
<dbReference type="InterPro" id="IPR011494">
    <property type="entry name" value="HIRA-like_C"/>
</dbReference>
<dbReference type="InterPro" id="IPR019015">
    <property type="entry name" value="HIRA_B_motif"/>
</dbReference>
<dbReference type="InterPro" id="IPR015943">
    <property type="entry name" value="WD40/YVTN_repeat-like_dom_sf"/>
</dbReference>
<dbReference type="InterPro" id="IPR019775">
    <property type="entry name" value="WD40_repeat_CS"/>
</dbReference>
<dbReference type="InterPro" id="IPR036322">
    <property type="entry name" value="WD40_repeat_dom_sf"/>
</dbReference>
<dbReference type="InterPro" id="IPR001680">
    <property type="entry name" value="WD40_rpt"/>
</dbReference>
<dbReference type="PANTHER" id="PTHR13831">
    <property type="entry name" value="MEMBER OF THE HIR1 FAMILY OF WD-REPEAT PROTEINS"/>
    <property type="match status" value="1"/>
</dbReference>
<dbReference type="PANTHER" id="PTHR13831:SF0">
    <property type="entry name" value="PROTEIN HIRA"/>
    <property type="match status" value="1"/>
</dbReference>
<dbReference type="Pfam" id="PF24105">
    <property type="entry name" value="Beta-prop_CAF1B_HIR1"/>
    <property type="match status" value="1"/>
</dbReference>
<dbReference type="Pfam" id="PF07569">
    <property type="entry name" value="Hira"/>
    <property type="match status" value="1"/>
</dbReference>
<dbReference type="Pfam" id="PF09453">
    <property type="entry name" value="HIRA_B"/>
    <property type="match status" value="1"/>
</dbReference>
<dbReference type="SMART" id="SM00320">
    <property type="entry name" value="WD40"/>
    <property type="match status" value="6"/>
</dbReference>
<dbReference type="SUPFAM" id="SSF50978">
    <property type="entry name" value="WD40 repeat-like"/>
    <property type="match status" value="1"/>
</dbReference>
<dbReference type="PROSITE" id="PS00678">
    <property type="entry name" value="WD_REPEATS_1"/>
    <property type="match status" value="2"/>
</dbReference>
<dbReference type="PROSITE" id="PS50082">
    <property type="entry name" value="WD_REPEATS_2"/>
    <property type="match status" value="4"/>
</dbReference>
<dbReference type="PROSITE" id="PS50294">
    <property type="entry name" value="WD_REPEATS_REGION"/>
    <property type="match status" value="1"/>
</dbReference>
<name>HIR1_KLULA</name>